<comment type="function">
    <text evidence="1">Required for rescue of stalled ribosomes mediated by trans-translation. Binds to transfer-messenger RNA (tmRNA), required for stable association of tmRNA with ribosomes. tmRNA and SmpB together mimic tRNA shape, replacing the anticodon stem-loop with SmpB. tmRNA is encoded by the ssrA gene; the 2 termini fold to resemble tRNA(Ala) and it encodes a 'tag peptide', a short internal open reading frame. During trans-translation Ala-aminoacylated tmRNA acts like a tRNA, entering the A-site of stalled ribosomes, displacing the stalled mRNA. The ribosome then switches to translate the ORF on the tmRNA; the nascent peptide is terminated with the 'tag peptide' encoded by the tmRNA and targeted for degradation. The ribosome is freed to recommence translation, which seems to be the essential function of trans-translation.</text>
</comment>
<comment type="subcellular location">
    <subcellularLocation>
        <location evidence="1">Cytoplasm</location>
    </subcellularLocation>
    <text evidence="1">The tmRNA-SmpB complex associates with stalled 70S ribosomes.</text>
</comment>
<comment type="similarity">
    <text evidence="1">Belongs to the SmpB family.</text>
</comment>
<organism>
    <name type="scientific">Streptococcus thermophilus (strain ATCC BAA-250 / LMG 18311)</name>
    <dbReference type="NCBI Taxonomy" id="264199"/>
    <lineage>
        <taxon>Bacteria</taxon>
        <taxon>Bacillati</taxon>
        <taxon>Bacillota</taxon>
        <taxon>Bacilli</taxon>
        <taxon>Lactobacillales</taxon>
        <taxon>Streptococcaceae</taxon>
        <taxon>Streptococcus</taxon>
    </lineage>
</organism>
<accession>Q5M570</accession>
<evidence type="ECO:0000255" key="1">
    <source>
        <dbReference type="HAMAP-Rule" id="MF_00023"/>
    </source>
</evidence>
<sequence length="154" mass="17555">MPKGEGNVVAQNKKARHDYSIVDTIEAGIVLTGTEIKSVRAARIQLKDGYAQIKNGEAWLINVHIAPFEQGNIWNQDPERTRKLLLKKKQITKLQNDLKGTGMTLVPLKVYLKNGFAKVLLGIAKGKHDYDKRESIKRREQERDIKRIIKSVNR</sequence>
<proteinExistence type="inferred from homology"/>
<protein>
    <recommendedName>
        <fullName evidence="1">SsrA-binding protein</fullName>
    </recommendedName>
    <alternativeName>
        <fullName evidence="1">Small protein B</fullName>
    </alternativeName>
</protein>
<feature type="chain" id="PRO_0000103048" description="SsrA-binding protein">
    <location>
        <begin position="1"/>
        <end position="154"/>
    </location>
</feature>
<keyword id="KW-0963">Cytoplasm</keyword>
<keyword id="KW-1185">Reference proteome</keyword>
<keyword id="KW-0694">RNA-binding</keyword>
<reference key="1">
    <citation type="journal article" date="2004" name="Nat. Biotechnol.">
        <title>Complete sequence and comparative genome analysis of the dairy bacterium Streptococcus thermophilus.</title>
        <authorList>
            <person name="Bolotin A."/>
            <person name="Quinquis B."/>
            <person name="Renault P."/>
            <person name="Sorokin A."/>
            <person name="Ehrlich S.D."/>
            <person name="Kulakauskas S."/>
            <person name="Lapidus A."/>
            <person name="Goltsman E."/>
            <person name="Mazur M."/>
            <person name="Pusch G.D."/>
            <person name="Fonstein M."/>
            <person name="Overbeek R."/>
            <person name="Kyprides N."/>
            <person name="Purnelle B."/>
            <person name="Prozzi D."/>
            <person name="Ngui K."/>
            <person name="Masuy D."/>
            <person name="Hancy F."/>
            <person name="Burteau S."/>
            <person name="Boutry M."/>
            <person name="Delcour J."/>
            <person name="Goffeau A."/>
            <person name="Hols P."/>
        </authorList>
    </citation>
    <scope>NUCLEOTIDE SEQUENCE [LARGE SCALE GENOMIC DNA]</scope>
    <source>
        <strain>ATCC BAA-250 / LMG 18311</strain>
    </source>
</reference>
<name>SSRP_STRT2</name>
<dbReference type="EMBL" id="CP000023">
    <property type="protein sequence ID" value="AAV60332.1"/>
    <property type="molecule type" value="Genomic_DNA"/>
</dbReference>
<dbReference type="RefSeq" id="WP_002950240.1">
    <property type="nucleotide sequence ID" value="NC_006448.1"/>
</dbReference>
<dbReference type="SMR" id="Q5M570"/>
<dbReference type="STRING" id="264199.stu0626"/>
<dbReference type="GeneID" id="66898533"/>
<dbReference type="KEGG" id="stl:stu0626"/>
<dbReference type="eggNOG" id="COG0691">
    <property type="taxonomic scope" value="Bacteria"/>
</dbReference>
<dbReference type="HOGENOM" id="CLU_108953_0_0_9"/>
<dbReference type="Proteomes" id="UP000001170">
    <property type="component" value="Chromosome"/>
</dbReference>
<dbReference type="GO" id="GO:0005829">
    <property type="term" value="C:cytosol"/>
    <property type="evidence" value="ECO:0007669"/>
    <property type="project" value="TreeGrafter"/>
</dbReference>
<dbReference type="GO" id="GO:0003723">
    <property type="term" value="F:RNA binding"/>
    <property type="evidence" value="ECO:0007669"/>
    <property type="project" value="UniProtKB-UniRule"/>
</dbReference>
<dbReference type="GO" id="GO:0070929">
    <property type="term" value="P:trans-translation"/>
    <property type="evidence" value="ECO:0007669"/>
    <property type="project" value="UniProtKB-UniRule"/>
</dbReference>
<dbReference type="CDD" id="cd09294">
    <property type="entry name" value="SmpB"/>
    <property type="match status" value="1"/>
</dbReference>
<dbReference type="Gene3D" id="2.40.280.10">
    <property type="match status" value="1"/>
</dbReference>
<dbReference type="HAMAP" id="MF_00023">
    <property type="entry name" value="SmpB"/>
    <property type="match status" value="1"/>
</dbReference>
<dbReference type="InterPro" id="IPR023620">
    <property type="entry name" value="SmpB"/>
</dbReference>
<dbReference type="InterPro" id="IPR000037">
    <property type="entry name" value="SsrA-bd_prot"/>
</dbReference>
<dbReference type="InterPro" id="IPR020081">
    <property type="entry name" value="SsrA-bd_prot_CS"/>
</dbReference>
<dbReference type="NCBIfam" id="NF003843">
    <property type="entry name" value="PRK05422.1"/>
    <property type="match status" value="1"/>
</dbReference>
<dbReference type="NCBIfam" id="TIGR00086">
    <property type="entry name" value="smpB"/>
    <property type="match status" value="1"/>
</dbReference>
<dbReference type="PANTHER" id="PTHR30308:SF2">
    <property type="entry name" value="SSRA-BINDING PROTEIN"/>
    <property type="match status" value="1"/>
</dbReference>
<dbReference type="PANTHER" id="PTHR30308">
    <property type="entry name" value="TMRNA-BINDING COMPONENT OF TRANS-TRANSLATION TAGGING COMPLEX"/>
    <property type="match status" value="1"/>
</dbReference>
<dbReference type="Pfam" id="PF01668">
    <property type="entry name" value="SmpB"/>
    <property type="match status" value="1"/>
</dbReference>
<dbReference type="SUPFAM" id="SSF74982">
    <property type="entry name" value="Small protein B (SmpB)"/>
    <property type="match status" value="1"/>
</dbReference>
<dbReference type="PROSITE" id="PS01317">
    <property type="entry name" value="SSRP"/>
    <property type="match status" value="1"/>
</dbReference>
<gene>
    <name evidence="1" type="primary">smpB</name>
    <name type="ordered locus">stu0626</name>
</gene>